<feature type="chain" id="PRO_0000230566" description="Small ribosomal subunit protein uS13">
    <location>
        <begin position="1"/>
        <end position="122"/>
    </location>
</feature>
<feature type="region of interest" description="Disordered" evidence="2">
    <location>
        <begin position="98"/>
        <end position="122"/>
    </location>
</feature>
<evidence type="ECO:0000255" key="1">
    <source>
        <dbReference type="HAMAP-Rule" id="MF_01315"/>
    </source>
</evidence>
<evidence type="ECO:0000256" key="2">
    <source>
        <dbReference type="SAM" id="MobiDB-lite"/>
    </source>
</evidence>
<evidence type="ECO:0000305" key="3"/>
<name>RS13_RUEPO</name>
<gene>
    <name evidence="1" type="primary">rpsM</name>
    <name type="ordered locus">SPO0509</name>
</gene>
<protein>
    <recommendedName>
        <fullName evidence="1">Small ribosomal subunit protein uS13</fullName>
    </recommendedName>
    <alternativeName>
        <fullName evidence="3">30S ribosomal protein S13</fullName>
    </alternativeName>
</protein>
<dbReference type="EMBL" id="CP000031">
    <property type="protein sequence ID" value="AAV93826.1"/>
    <property type="molecule type" value="Genomic_DNA"/>
</dbReference>
<dbReference type="RefSeq" id="WP_011046268.1">
    <property type="nucleotide sequence ID" value="NC_003911.12"/>
</dbReference>
<dbReference type="SMR" id="Q5LW34"/>
<dbReference type="STRING" id="246200.SPO0509"/>
<dbReference type="PaxDb" id="246200-SPO0509"/>
<dbReference type="KEGG" id="sil:SPO0509"/>
<dbReference type="eggNOG" id="COG0099">
    <property type="taxonomic scope" value="Bacteria"/>
</dbReference>
<dbReference type="HOGENOM" id="CLU_103849_1_2_5"/>
<dbReference type="OrthoDB" id="9803610at2"/>
<dbReference type="Proteomes" id="UP000001023">
    <property type="component" value="Chromosome"/>
</dbReference>
<dbReference type="GO" id="GO:0005829">
    <property type="term" value="C:cytosol"/>
    <property type="evidence" value="ECO:0007669"/>
    <property type="project" value="TreeGrafter"/>
</dbReference>
<dbReference type="GO" id="GO:0015935">
    <property type="term" value="C:small ribosomal subunit"/>
    <property type="evidence" value="ECO:0007669"/>
    <property type="project" value="TreeGrafter"/>
</dbReference>
<dbReference type="GO" id="GO:0019843">
    <property type="term" value="F:rRNA binding"/>
    <property type="evidence" value="ECO:0007669"/>
    <property type="project" value="UniProtKB-UniRule"/>
</dbReference>
<dbReference type="GO" id="GO:0003735">
    <property type="term" value="F:structural constituent of ribosome"/>
    <property type="evidence" value="ECO:0007669"/>
    <property type="project" value="InterPro"/>
</dbReference>
<dbReference type="GO" id="GO:0000049">
    <property type="term" value="F:tRNA binding"/>
    <property type="evidence" value="ECO:0007669"/>
    <property type="project" value="UniProtKB-UniRule"/>
</dbReference>
<dbReference type="GO" id="GO:0006412">
    <property type="term" value="P:translation"/>
    <property type="evidence" value="ECO:0007669"/>
    <property type="project" value="UniProtKB-UniRule"/>
</dbReference>
<dbReference type="FunFam" id="1.10.8.50:FF:000001">
    <property type="entry name" value="30S ribosomal protein S13"/>
    <property type="match status" value="1"/>
</dbReference>
<dbReference type="FunFam" id="4.10.910.10:FF:000001">
    <property type="entry name" value="30S ribosomal protein S13"/>
    <property type="match status" value="1"/>
</dbReference>
<dbReference type="Gene3D" id="1.10.8.50">
    <property type="match status" value="1"/>
</dbReference>
<dbReference type="Gene3D" id="4.10.910.10">
    <property type="entry name" value="30s ribosomal protein s13, domain 2"/>
    <property type="match status" value="1"/>
</dbReference>
<dbReference type="HAMAP" id="MF_01315">
    <property type="entry name" value="Ribosomal_uS13"/>
    <property type="match status" value="1"/>
</dbReference>
<dbReference type="InterPro" id="IPR027437">
    <property type="entry name" value="Rbsml_uS13_C"/>
</dbReference>
<dbReference type="InterPro" id="IPR001892">
    <property type="entry name" value="Ribosomal_uS13"/>
</dbReference>
<dbReference type="InterPro" id="IPR010979">
    <property type="entry name" value="Ribosomal_uS13-like_H2TH"/>
</dbReference>
<dbReference type="InterPro" id="IPR019980">
    <property type="entry name" value="Ribosomal_uS13_bac-type"/>
</dbReference>
<dbReference type="InterPro" id="IPR018269">
    <property type="entry name" value="Ribosomal_uS13_CS"/>
</dbReference>
<dbReference type="NCBIfam" id="TIGR03631">
    <property type="entry name" value="uS13_bact"/>
    <property type="match status" value="1"/>
</dbReference>
<dbReference type="PANTHER" id="PTHR10871">
    <property type="entry name" value="30S RIBOSOMAL PROTEIN S13/40S RIBOSOMAL PROTEIN S18"/>
    <property type="match status" value="1"/>
</dbReference>
<dbReference type="PANTHER" id="PTHR10871:SF1">
    <property type="entry name" value="SMALL RIBOSOMAL SUBUNIT PROTEIN US13M"/>
    <property type="match status" value="1"/>
</dbReference>
<dbReference type="Pfam" id="PF00416">
    <property type="entry name" value="Ribosomal_S13"/>
    <property type="match status" value="1"/>
</dbReference>
<dbReference type="PIRSF" id="PIRSF002134">
    <property type="entry name" value="Ribosomal_S13"/>
    <property type="match status" value="1"/>
</dbReference>
<dbReference type="SUPFAM" id="SSF46946">
    <property type="entry name" value="S13-like H2TH domain"/>
    <property type="match status" value="1"/>
</dbReference>
<dbReference type="PROSITE" id="PS00646">
    <property type="entry name" value="RIBOSOMAL_S13_1"/>
    <property type="match status" value="1"/>
</dbReference>
<dbReference type="PROSITE" id="PS50159">
    <property type="entry name" value="RIBOSOMAL_S13_2"/>
    <property type="match status" value="1"/>
</dbReference>
<proteinExistence type="inferred from homology"/>
<reference key="1">
    <citation type="journal article" date="2004" name="Nature">
        <title>Genome sequence of Silicibacter pomeroyi reveals adaptations to the marine environment.</title>
        <authorList>
            <person name="Moran M.A."/>
            <person name="Buchan A."/>
            <person name="Gonzalez J.M."/>
            <person name="Heidelberg J.F."/>
            <person name="Whitman W.B."/>
            <person name="Kiene R.P."/>
            <person name="Henriksen J.R."/>
            <person name="King G.M."/>
            <person name="Belas R."/>
            <person name="Fuqua C."/>
            <person name="Brinkac L.M."/>
            <person name="Lewis M."/>
            <person name="Johri S."/>
            <person name="Weaver B."/>
            <person name="Pai G."/>
            <person name="Eisen J.A."/>
            <person name="Rahe E."/>
            <person name="Sheldon W.M."/>
            <person name="Ye W."/>
            <person name="Miller T.R."/>
            <person name="Carlton J."/>
            <person name="Rasko D.A."/>
            <person name="Paulsen I.T."/>
            <person name="Ren Q."/>
            <person name="Daugherty S.C."/>
            <person name="DeBoy R.T."/>
            <person name="Dodson R.J."/>
            <person name="Durkin A.S."/>
            <person name="Madupu R."/>
            <person name="Nelson W.C."/>
            <person name="Sullivan S.A."/>
            <person name="Rosovitz M.J."/>
            <person name="Haft D.H."/>
            <person name="Selengut J."/>
            <person name="Ward N."/>
        </authorList>
    </citation>
    <scope>NUCLEOTIDE SEQUENCE [LARGE SCALE GENOMIC DNA]</scope>
    <source>
        <strain>ATCC 700808 / DSM 15171 / DSS-3</strain>
    </source>
</reference>
<reference key="2">
    <citation type="journal article" date="2014" name="Stand. Genomic Sci.">
        <title>An updated genome annotation for the model marine bacterium Ruegeria pomeroyi DSS-3.</title>
        <authorList>
            <person name="Rivers A.R."/>
            <person name="Smith C.B."/>
            <person name="Moran M.A."/>
        </authorList>
    </citation>
    <scope>GENOME REANNOTATION</scope>
    <source>
        <strain>ATCC 700808 / DSM 15171 / DSS-3</strain>
    </source>
</reference>
<organism>
    <name type="scientific">Ruegeria pomeroyi (strain ATCC 700808 / DSM 15171 / DSS-3)</name>
    <name type="common">Silicibacter pomeroyi</name>
    <dbReference type="NCBI Taxonomy" id="246200"/>
    <lineage>
        <taxon>Bacteria</taxon>
        <taxon>Pseudomonadati</taxon>
        <taxon>Pseudomonadota</taxon>
        <taxon>Alphaproteobacteria</taxon>
        <taxon>Rhodobacterales</taxon>
        <taxon>Roseobacteraceae</taxon>
        <taxon>Ruegeria</taxon>
    </lineage>
</organism>
<keyword id="KW-1185">Reference proteome</keyword>
<keyword id="KW-0687">Ribonucleoprotein</keyword>
<keyword id="KW-0689">Ribosomal protein</keyword>
<keyword id="KW-0694">RNA-binding</keyword>
<keyword id="KW-0699">rRNA-binding</keyword>
<keyword id="KW-0820">tRNA-binding</keyword>
<comment type="function">
    <text evidence="1">Located at the top of the head of the 30S subunit, it contacts several helices of the 16S rRNA. In the 70S ribosome it contacts the 23S rRNA (bridge B1a) and protein L5 of the 50S subunit (bridge B1b), connecting the 2 subunits; these bridges are implicated in subunit movement. Contacts the tRNAs in the A and P-sites.</text>
</comment>
<comment type="subunit">
    <text evidence="1">Part of the 30S ribosomal subunit. Forms a loose heterodimer with protein S19. Forms two bridges to the 50S subunit in the 70S ribosome.</text>
</comment>
<comment type="similarity">
    <text evidence="1">Belongs to the universal ribosomal protein uS13 family.</text>
</comment>
<sequence>MARIAGVNIPTAKRVPIALTYITGIGNTSAKAICEAVGIDATRRVNELSDAEILAIREHIDANYSVEGDLRREVQMNIKRLMDLGCYRGLRHRRNLPVRGQRTHTNARTRKGPAKAIAGKKK</sequence>
<accession>Q5LW34</accession>